<comment type="function">
    <text evidence="7 9">Plant lipoxygenase involved in a number of diverse aspects of plant physiology including growth and development, pest resistance, and senescence. May not be involved in the bulk production of jasmonate upon wounding. Catalyzes the hydroperoxidation of lipids containing a cis,cis-1,4-pentadiene structure. Linolenic acid is the preferred substrate, before linoleic and arachidonic acids. Also has some activity with phosphatidylglycerol, but not with galactolipids.</text>
</comment>
<comment type="catalytic activity">
    <reaction evidence="7 9">
        <text>(9Z,12Z)-octadecadienoate + O2 = (13S)-hydroperoxy-(9Z,11E)-octadecadienoate</text>
        <dbReference type="Rhea" id="RHEA:22780"/>
        <dbReference type="ChEBI" id="CHEBI:15379"/>
        <dbReference type="ChEBI" id="CHEBI:30245"/>
        <dbReference type="ChEBI" id="CHEBI:57466"/>
        <dbReference type="EC" id="1.13.11.12"/>
    </reaction>
    <physiologicalReaction direction="left-to-right" evidence="9">
        <dbReference type="Rhea" id="RHEA:22781"/>
    </physiologicalReaction>
</comment>
<comment type="catalytic activity">
    <reaction evidence="7 9">
        <text>(9Z,12Z,15Z)-octadecatrienoate + O2 = (13S)-hydroperoxy-(9Z,11E,15Z)-octadecatrienoate</text>
        <dbReference type="Rhea" id="RHEA:34495"/>
        <dbReference type="ChEBI" id="CHEBI:15379"/>
        <dbReference type="ChEBI" id="CHEBI:32387"/>
        <dbReference type="ChEBI" id="CHEBI:58757"/>
        <dbReference type="EC" id="1.13.11.12"/>
    </reaction>
    <physiologicalReaction direction="left-to-right" evidence="9">
        <dbReference type="Rhea" id="RHEA:34496"/>
    </physiologicalReaction>
</comment>
<comment type="cofactor">
    <cofactor evidence="4">
        <name>Fe cation</name>
        <dbReference type="ChEBI" id="CHEBI:24875"/>
    </cofactor>
    <text evidence="4">Binds 1 Fe cation per subunit.</text>
</comment>
<comment type="biophysicochemical properties">
    <phDependence>
        <text evidence="9">Optimum pH is 7.0.</text>
    </phDependence>
</comment>
<comment type="pathway">
    <text evidence="4 7 9">Lipid metabolism; oxylipin biosynthesis.</text>
</comment>
<comment type="subunit">
    <text evidence="1">Monomer.</text>
</comment>
<comment type="subcellular location">
    <subcellularLocation>
        <location evidence="7 8">Plastid</location>
        <location evidence="7 8">Chloroplast stroma</location>
    </subcellularLocation>
    <subcellularLocation>
        <location evidence="8">Plastid</location>
        <location evidence="8">Chloroplast thylakoid</location>
    </subcellularLocation>
    <text evidence="8">Associated with the non-appressed part of the thylakoid membrane.</text>
</comment>
<comment type="tissue specificity">
    <text evidence="9">Expressed in leaves and floral buds.</text>
</comment>
<comment type="induction">
    <text evidence="6 8 9">Up-regulated by jasmonate and abscisic acid treatment. Up-regulated locally and systemically at the transcript levels 6 hours after wounding, but the protein levels remain constant. Not induced by pathogen infection.</text>
</comment>
<comment type="miscellaneous">
    <text evidence="7">99% depletion of LOX-H1 by co-suppression-mediated gene silencing has no effect on the basal or wound-induced levels of jasmonates but results in a marked reduction in the production of volatile aliphatic C6 aldehydes.</text>
</comment>
<comment type="similarity">
    <text evidence="13">Belongs to the lipoxygenase family.</text>
</comment>
<proteinExistence type="evidence at protein level"/>
<sequence length="899" mass="101937">MLKPQLQQSSQSTKALIPSWNTNPLFLASFPINILNKNFRLKKKNNFRVHHNYNGASTTKAVLSSTEKATGVKAVVTVQKQVNLNLSRGLDDIGDLLGKSLLLWIVAAELDHKTGIEKPGIRAYAHRGRDVDGDTHYEADFVIPQDFGEVGAILIENEHHKEMYVKNIVIDGFVHGKVEITCNSWVHSKFDNPDKRIFFTNKSYLPSQTPSGVSRLREEELVTLRGDGIGERKVFERIYDYDVYNDLGEADSNNDDAKRPVLGGKELPYPRRCKTGRPRSKKDPLSETRSTFVYVPRDEAFSEVKSVAFSGNTVYSVLHAVVPALESVVTDPNLGFPHFPAIDSLFNVGVDLPGLGDKKSGLFNVVPRLIKAISDTRKDVLLFESPQLVQRDKFSWFRDVEFARQTLAGLNPYSIRLVTEWPLRSKLDPKVYGPPESEITKELIEKEIGNYMTVEQAVQQKKLFILDYHDLLLPYVNKVNELKGSMLYGSRTIFFLTPQGTLKPLAIELTRPPVDDKPQWKEVYSPNDWNATGAWLWKLAKAHVLSHDSGYHQLVSHWLRTHCCTEPYIIASNRQLSAMHPIYRLLHPHFRYTMEINALAREALINANGVIESSFFPGKYAIELSSIAYGAEWRFDQEALPQNLISRGLAVEDPNEPHGLKLAIEDYPFANDGLVLWDILKQWVTNYVNHYYPQTNLIESDKELQAWWSEIKNVGHGDKRDEPWWPELKTPNDLIGIITTIVWVTSGHHAAVNFGQYSYAGYFPNRPTVARSKMPTEDPTAEEWEWFMNKPEEALLRCFPSQIQATKVMAILDVLSNHSPDEEYIGEKIEPYWAEDPVINAAFEVFSGKLKELEGIIDARNNDSKLSNRNGAGVMPYELLKPYSEPGVTGKGVPYSISI</sequence>
<name>LOX21_SOLTU</name>
<feature type="transit peptide" description="Chloroplast" evidence="2">
    <location>
        <begin position="1"/>
        <end position="40"/>
    </location>
</feature>
<feature type="chain" id="PRO_0000412927" description="Linoleate 13S-lipoxygenase 2-1, chloroplastic">
    <location>
        <begin position="41"/>
        <end position="899"/>
    </location>
</feature>
<feature type="domain" description="PLAT" evidence="3">
    <location>
        <begin position="78"/>
        <end position="200"/>
    </location>
</feature>
<feature type="domain" description="Lipoxygenase" evidence="4">
    <location>
        <begin position="203"/>
        <end position="899"/>
    </location>
</feature>
<feature type="region of interest" description="Disordered" evidence="5">
    <location>
        <begin position="252"/>
        <end position="287"/>
    </location>
</feature>
<feature type="compositionally biased region" description="Basic residues" evidence="5">
    <location>
        <begin position="271"/>
        <end position="280"/>
    </location>
</feature>
<feature type="binding site" evidence="4">
    <location>
        <position position="557"/>
    </location>
    <ligand>
        <name>Fe cation</name>
        <dbReference type="ChEBI" id="CHEBI:24875"/>
        <note>catalytic</note>
    </ligand>
</feature>
<feature type="binding site" evidence="4">
    <location>
        <position position="562"/>
    </location>
    <ligand>
        <name>Fe cation</name>
        <dbReference type="ChEBI" id="CHEBI:24875"/>
        <note>catalytic</note>
    </ligand>
</feature>
<feature type="binding site" evidence="4">
    <location>
        <position position="749"/>
    </location>
    <ligand>
        <name>Fe cation</name>
        <dbReference type="ChEBI" id="CHEBI:24875"/>
        <note>catalytic</note>
    </ligand>
</feature>
<feature type="binding site" evidence="4">
    <location>
        <position position="753"/>
    </location>
    <ligand>
        <name>Fe cation</name>
        <dbReference type="ChEBI" id="CHEBI:24875"/>
        <note>catalytic</note>
    </ligand>
</feature>
<feature type="binding site" evidence="4">
    <location>
        <position position="899"/>
    </location>
    <ligand>
        <name>Fe cation</name>
        <dbReference type="ChEBI" id="CHEBI:24875"/>
        <note>catalytic</note>
    </ligand>
</feature>
<keyword id="KW-0150">Chloroplast</keyword>
<keyword id="KW-0223">Dioxygenase</keyword>
<keyword id="KW-0275">Fatty acid biosynthesis</keyword>
<keyword id="KW-0276">Fatty acid metabolism</keyword>
<keyword id="KW-0408">Iron</keyword>
<keyword id="KW-0444">Lipid biosynthesis</keyword>
<keyword id="KW-0443">Lipid metabolism</keyword>
<keyword id="KW-0479">Metal-binding</keyword>
<keyword id="KW-0560">Oxidoreductase</keyword>
<keyword id="KW-0925">Oxylipin biosynthesis</keyword>
<keyword id="KW-0934">Plastid</keyword>
<keyword id="KW-1185">Reference proteome</keyword>
<keyword id="KW-0793">Thylakoid</keyword>
<keyword id="KW-0809">Transit peptide</keyword>
<reference key="1">
    <citation type="journal article" date="1996" name="J. Biol. Chem.">
        <title>Characterization of three potato lipoxygenases with distinct enzymatic activities and different organ-specific and wound-regulated expression patterns.</title>
        <authorList>
            <person name="Royo J."/>
            <person name="Vancanneyt G."/>
            <person name="Perez A.G."/>
            <person name="Sanz C."/>
            <person name="Stormann K."/>
            <person name="Rosahl S."/>
            <person name="Sanchez-Serrano J.J."/>
        </authorList>
    </citation>
    <scope>NUCLEOTIDE SEQUENCE [MRNA]</scope>
    <scope>FUNCTION</scope>
    <scope>CATALYTIC ACTIVITY</scope>
    <scope>TISSUE SPECIFICITY</scope>
    <scope>INDUCTION BY WOUNDING; JASMONATE AND ABSCISIC ACID</scope>
    <scope>BIOPHYSICOCHEMICAL PROPERTIES</scope>
    <scope>PATHWAY</scope>
</reference>
<reference key="2">
    <citation type="journal article" date="2000" name="Plant Physiol.">
        <title>A leaf lipoxygenase of potato induced specifically by pathogen infection.</title>
        <authorList>
            <person name="Kolomiets M.V."/>
            <person name="Chen H."/>
            <person name="Gladon R.J."/>
            <person name="Braun E.J."/>
            <person name="Hannapel D.J."/>
        </authorList>
    </citation>
    <scope>INDUCTION BY PATHOGEN</scope>
</reference>
<reference key="3">
    <citation type="journal article" date="2002" name="J. Biol. Chem.">
        <title>Lipoxygenase H1 gene silencing reveals a specific role in supplying fatty acid hydroperoxides for aliphatic aldehyde production.</title>
        <authorList>
            <person name="Leon J."/>
            <person name="Royo J."/>
            <person name="Vancanneyt G."/>
            <person name="Sanz C."/>
            <person name="Silkowski H."/>
            <person name="Griffiths G."/>
            <person name="Sanchez-Serrano J.J."/>
        </authorList>
    </citation>
    <scope>FUNCTION</scope>
    <scope>SUBCELLULAR LOCATION</scope>
    <scope>CATALYTIC ACTIVITY</scope>
    <scope>PATHWAY</scope>
</reference>
<reference key="4">
    <citation type="journal article" date="2007" name="J. Exp. Bot.">
        <title>Differential distribution of the lipoxygenase pathway enzymes within potato chloroplasts.</title>
        <authorList>
            <person name="Farmaki T."/>
            <person name="Sanmartin M."/>
            <person name="Jimenez P."/>
            <person name="Paneque M."/>
            <person name="Sanz C."/>
            <person name="Vancanneyt G."/>
            <person name="Leon J."/>
            <person name="Sanchez-Serrano J.J."/>
        </authorList>
    </citation>
    <scope>SUBCELLULAR LOCATION</scope>
    <scope>INDUCTION BY WOUNDING</scope>
</reference>
<evidence type="ECO:0000250" key="1">
    <source>
        <dbReference type="UniProtKB" id="P08170"/>
    </source>
</evidence>
<evidence type="ECO:0000255" key="2"/>
<evidence type="ECO:0000255" key="3">
    <source>
        <dbReference type="PROSITE-ProRule" id="PRU00152"/>
    </source>
</evidence>
<evidence type="ECO:0000255" key="4">
    <source>
        <dbReference type="PROSITE-ProRule" id="PRU00726"/>
    </source>
</evidence>
<evidence type="ECO:0000256" key="5">
    <source>
        <dbReference type="SAM" id="MobiDB-lite"/>
    </source>
</evidence>
<evidence type="ECO:0000269" key="6">
    <source>
    </source>
</evidence>
<evidence type="ECO:0000269" key="7">
    <source>
    </source>
</evidence>
<evidence type="ECO:0000269" key="8">
    <source>
    </source>
</evidence>
<evidence type="ECO:0000269" key="9">
    <source>
    </source>
</evidence>
<evidence type="ECO:0000303" key="10">
    <source>
    </source>
</evidence>
<evidence type="ECO:0000303" key="11">
    <source>
    </source>
</evidence>
<evidence type="ECO:0000303" key="12">
    <source>
    </source>
</evidence>
<evidence type="ECO:0000305" key="13"/>
<accession>O24370</accession>
<dbReference type="EC" id="1.13.11.12" evidence="7 9"/>
<dbReference type="EMBL" id="X96405">
    <property type="protein sequence ID" value="CAA65268.1"/>
    <property type="molecule type" value="mRNA"/>
</dbReference>
<dbReference type="PIR" id="T07062">
    <property type="entry name" value="T07062"/>
</dbReference>
<dbReference type="RefSeq" id="NP_001274843.1">
    <property type="nucleotide sequence ID" value="NM_001287914.1"/>
</dbReference>
<dbReference type="SMR" id="O24370"/>
<dbReference type="FunCoup" id="O24370">
    <property type="interactions" value="51"/>
</dbReference>
<dbReference type="STRING" id="4113.O24370"/>
<dbReference type="PaxDb" id="4113-PGSC0003DMT400081909"/>
<dbReference type="GeneID" id="102596122"/>
<dbReference type="KEGG" id="sot:102596122"/>
<dbReference type="eggNOG" id="ENOG502QQSP">
    <property type="taxonomic scope" value="Eukaryota"/>
</dbReference>
<dbReference type="InParanoid" id="O24370"/>
<dbReference type="OrthoDB" id="407298at2759"/>
<dbReference type="UniPathway" id="UPA00382"/>
<dbReference type="Proteomes" id="UP000011115">
    <property type="component" value="Unassembled WGS sequence"/>
</dbReference>
<dbReference type="ExpressionAtlas" id="O24370">
    <property type="expression patterns" value="baseline and differential"/>
</dbReference>
<dbReference type="GO" id="GO:0009570">
    <property type="term" value="C:chloroplast stroma"/>
    <property type="evidence" value="ECO:0007669"/>
    <property type="project" value="UniProtKB-SubCell"/>
</dbReference>
<dbReference type="GO" id="GO:0009534">
    <property type="term" value="C:chloroplast thylakoid"/>
    <property type="evidence" value="ECO:0007669"/>
    <property type="project" value="UniProtKB-SubCell"/>
</dbReference>
<dbReference type="GO" id="GO:0016165">
    <property type="term" value="F:linoleate 13S-lipoxygenase activity"/>
    <property type="evidence" value="ECO:0000314"/>
    <property type="project" value="CACAO"/>
</dbReference>
<dbReference type="GO" id="GO:0046872">
    <property type="term" value="F:metal ion binding"/>
    <property type="evidence" value="ECO:0007669"/>
    <property type="project" value="UniProtKB-KW"/>
</dbReference>
<dbReference type="GO" id="GO:0016702">
    <property type="term" value="F:oxidoreductase activity, acting on single donors with incorporation of molecular oxygen, incorporation of two atoms of oxygen"/>
    <property type="evidence" value="ECO:0000318"/>
    <property type="project" value="GO_Central"/>
</dbReference>
<dbReference type="GO" id="GO:0006633">
    <property type="term" value="P:fatty acid biosynthetic process"/>
    <property type="evidence" value="ECO:0007669"/>
    <property type="project" value="UniProtKB-KW"/>
</dbReference>
<dbReference type="GO" id="GO:0010597">
    <property type="term" value="P:green leaf volatile biosynthetic process"/>
    <property type="evidence" value="ECO:0000304"/>
    <property type="project" value="AgBase"/>
</dbReference>
<dbReference type="GO" id="GO:0034440">
    <property type="term" value="P:lipid oxidation"/>
    <property type="evidence" value="ECO:0000318"/>
    <property type="project" value="GO_Central"/>
</dbReference>
<dbReference type="GO" id="GO:0031408">
    <property type="term" value="P:oxylipin biosynthetic process"/>
    <property type="evidence" value="ECO:0007669"/>
    <property type="project" value="UniProtKB-UniPathway"/>
</dbReference>
<dbReference type="CDD" id="cd01751">
    <property type="entry name" value="PLAT_LH2"/>
    <property type="match status" value="1"/>
</dbReference>
<dbReference type="FunFam" id="1.20.245.10:FF:000002">
    <property type="entry name" value="Lipoxygenase"/>
    <property type="match status" value="1"/>
</dbReference>
<dbReference type="FunFam" id="2.60.60.20:FF:000021">
    <property type="entry name" value="Lipoxygenase"/>
    <property type="match status" value="1"/>
</dbReference>
<dbReference type="FunFam" id="3.10.450.60:FF:000005">
    <property type="entry name" value="Lipoxygenase"/>
    <property type="match status" value="1"/>
</dbReference>
<dbReference type="Gene3D" id="3.10.450.60">
    <property type="match status" value="1"/>
</dbReference>
<dbReference type="Gene3D" id="4.10.375.10">
    <property type="entry name" value="Lipoxygenase-1, Domain 2"/>
    <property type="match status" value="1"/>
</dbReference>
<dbReference type="Gene3D" id="4.10.372.10">
    <property type="entry name" value="Lipoxygenase-1, Domain 3"/>
    <property type="match status" value="1"/>
</dbReference>
<dbReference type="Gene3D" id="1.20.245.10">
    <property type="entry name" value="Lipoxygenase-1, Domain 5"/>
    <property type="match status" value="1"/>
</dbReference>
<dbReference type="Gene3D" id="2.60.60.20">
    <property type="entry name" value="PLAT/LH2 domain"/>
    <property type="match status" value="1"/>
</dbReference>
<dbReference type="InterPro" id="IPR000907">
    <property type="entry name" value="LipOase"/>
</dbReference>
<dbReference type="InterPro" id="IPR013819">
    <property type="entry name" value="LipOase_C"/>
</dbReference>
<dbReference type="InterPro" id="IPR036226">
    <property type="entry name" value="LipOase_C_sf"/>
</dbReference>
<dbReference type="InterPro" id="IPR020834">
    <property type="entry name" value="LipOase_CS"/>
</dbReference>
<dbReference type="InterPro" id="IPR020833">
    <property type="entry name" value="LipOase_Fe_BS"/>
</dbReference>
<dbReference type="InterPro" id="IPR001246">
    <property type="entry name" value="LipOase_plant"/>
</dbReference>
<dbReference type="InterPro" id="IPR042057">
    <property type="entry name" value="Lipoxy_PLAT/LH2"/>
</dbReference>
<dbReference type="InterPro" id="IPR027433">
    <property type="entry name" value="Lipoxygenase_dom_3"/>
</dbReference>
<dbReference type="InterPro" id="IPR001024">
    <property type="entry name" value="PLAT/LH2_dom"/>
</dbReference>
<dbReference type="InterPro" id="IPR036392">
    <property type="entry name" value="PLAT/LH2_dom_sf"/>
</dbReference>
<dbReference type="PANTHER" id="PTHR11771">
    <property type="entry name" value="LIPOXYGENASE"/>
    <property type="match status" value="1"/>
</dbReference>
<dbReference type="Pfam" id="PF00305">
    <property type="entry name" value="Lipoxygenase"/>
    <property type="match status" value="1"/>
</dbReference>
<dbReference type="Pfam" id="PF01477">
    <property type="entry name" value="PLAT"/>
    <property type="match status" value="1"/>
</dbReference>
<dbReference type="PRINTS" id="PR00087">
    <property type="entry name" value="LIPOXYGENASE"/>
</dbReference>
<dbReference type="PRINTS" id="PR00468">
    <property type="entry name" value="PLTLPOXGNASE"/>
</dbReference>
<dbReference type="SMART" id="SM00308">
    <property type="entry name" value="LH2"/>
    <property type="match status" value="1"/>
</dbReference>
<dbReference type="SUPFAM" id="SSF49723">
    <property type="entry name" value="Lipase/lipooxygenase domain (PLAT/LH2 domain)"/>
    <property type="match status" value="1"/>
</dbReference>
<dbReference type="SUPFAM" id="SSF48484">
    <property type="entry name" value="Lipoxigenase"/>
    <property type="match status" value="1"/>
</dbReference>
<dbReference type="PROSITE" id="PS00711">
    <property type="entry name" value="LIPOXYGENASE_1"/>
    <property type="match status" value="1"/>
</dbReference>
<dbReference type="PROSITE" id="PS00081">
    <property type="entry name" value="LIPOXYGENASE_2"/>
    <property type="match status" value="1"/>
</dbReference>
<dbReference type="PROSITE" id="PS51393">
    <property type="entry name" value="LIPOXYGENASE_3"/>
    <property type="match status" value="1"/>
</dbReference>
<dbReference type="PROSITE" id="PS50095">
    <property type="entry name" value="PLAT"/>
    <property type="match status" value="1"/>
</dbReference>
<protein>
    <recommendedName>
        <fullName evidence="12">Linoleate 13S-lipoxygenase 2-1, chloroplastic</fullName>
        <ecNumber evidence="7 9">1.13.11.12</ecNumber>
    </recommendedName>
    <alternativeName>
        <fullName evidence="12">Lipoxygenase 2-1</fullName>
    </alternativeName>
</protein>
<gene>
    <name evidence="12" type="primary">LOX2.1</name>
    <name evidence="10 11 12" type="synonym">LOX-H1</name>
</gene>
<organism>
    <name type="scientific">Solanum tuberosum</name>
    <name type="common">Potato</name>
    <dbReference type="NCBI Taxonomy" id="4113"/>
    <lineage>
        <taxon>Eukaryota</taxon>
        <taxon>Viridiplantae</taxon>
        <taxon>Streptophyta</taxon>
        <taxon>Embryophyta</taxon>
        <taxon>Tracheophyta</taxon>
        <taxon>Spermatophyta</taxon>
        <taxon>Magnoliopsida</taxon>
        <taxon>eudicotyledons</taxon>
        <taxon>Gunneridae</taxon>
        <taxon>Pentapetalae</taxon>
        <taxon>asterids</taxon>
        <taxon>lamiids</taxon>
        <taxon>Solanales</taxon>
        <taxon>Solanaceae</taxon>
        <taxon>Solanoideae</taxon>
        <taxon>Solaneae</taxon>
        <taxon>Solanum</taxon>
    </lineage>
</organism>